<dbReference type="EMBL" id="AY123439">
    <property type="protein sequence ID" value="AAO23134.1"/>
    <property type="molecule type" value="Genomic_DNA"/>
</dbReference>
<dbReference type="EMBL" id="AY123435">
    <property type="protein sequence ID" value="AAO23134.1"/>
    <property type="status" value="JOINED"/>
    <property type="molecule type" value="Genomic_DNA"/>
</dbReference>
<dbReference type="RefSeq" id="XP_003905447.1">
    <property type="nucleotide sequence ID" value="XM_003905398.4"/>
</dbReference>
<dbReference type="BMRB" id="Q866X0"/>
<dbReference type="SMR" id="Q866X0"/>
<dbReference type="STRING" id="9555.ENSPANP00000013098"/>
<dbReference type="Ensembl" id="ENSPANT00000029082.3">
    <property type="protein sequence ID" value="ENSPANP00000013098.1"/>
    <property type="gene ID" value="ENSPANG00000025010.3"/>
</dbReference>
<dbReference type="GeneID" id="101026471"/>
<dbReference type="KEGG" id="panu:101026471"/>
<dbReference type="CTD" id="164633"/>
<dbReference type="eggNOG" id="KOG0027">
    <property type="taxonomic scope" value="Eukaryota"/>
</dbReference>
<dbReference type="GeneTree" id="ENSGT00940000159368"/>
<dbReference type="HOGENOM" id="CLU_106115_0_0_1"/>
<dbReference type="OMA" id="TQQIKQT"/>
<dbReference type="OrthoDB" id="1862at314294"/>
<dbReference type="Proteomes" id="UP000028761">
    <property type="component" value="Chromosome 16"/>
</dbReference>
<dbReference type="Bgee" id="ENSPANG00000025010">
    <property type="expression patterns" value="Expressed in iris and 12 other cell types or tissues"/>
</dbReference>
<dbReference type="GO" id="GO:0048471">
    <property type="term" value="C:perinuclear region of cytoplasm"/>
    <property type="evidence" value="ECO:0007669"/>
    <property type="project" value="UniProtKB-SubCell"/>
</dbReference>
<dbReference type="GO" id="GO:0005886">
    <property type="term" value="C:plasma membrane"/>
    <property type="evidence" value="ECO:0007669"/>
    <property type="project" value="UniProtKB-SubCell"/>
</dbReference>
<dbReference type="GO" id="GO:0032588">
    <property type="term" value="C:trans-Golgi network membrane"/>
    <property type="evidence" value="ECO:0007669"/>
    <property type="project" value="Ensembl"/>
</dbReference>
<dbReference type="GO" id="GO:0005509">
    <property type="term" value="F:calcium ion binding"/>
    <property type="evidence" value="ECO:0007669"/>
    <property type="project" value="InterPro"/>
</dbReference>
<dbReference type="CDD" id="cd00051">
    <property type="entry name" value="EFh"/>
    <property type="match status" value="1"/>
</dbReference>
<dbReference type="FunFam" id="1.10.238.10:FF:000115">
    <property type="entry name" value="Calcium-binding protein 8"/>
    <property type="match status" value="1"/>
</dbReference>
<dbReference type="Gene3D" id="1.10.238.10">
    <property type="entry name" value="EF-hand"/>
    <property type="match status" value="1"/>
</dbReference>
<dbReference type="InterPro" id="IPR051111">
    <property type="entry name" value="Ca-binding_regulatory"/>
</dbReference>
<dbReference type="InterPro" id="IPR011992">
    <property type="entry name" value="EF-hand-dom_pair"/>
</dbReference>
<dbReference type="InterPro" id="IPR018247">
    <property type="entry name" value="EF_Hand_1_Ca_BS"/>
</dbReference>
<dbReference type="InterPro" id="IPR002048">
    <property type="entry name" value="EF_hand_dom"/>
</dbReference>
<dbReference type="InterPro" id="IPR001751">
    <property type="entry name" value="S100/CaBP7/8-like_CS"/>
</dbReference>
<dbReference type="PANTHER" id="PTHR46311:SF1">
    <property type="entry name" value="CALCIUM-BINDING PROTEIN 7"/>
    <property type="match status" value="1"/>
</dbReference>
<dbReference type="PANTHER" id="PTHR46311">
    <property type="entry name" value="CALCIUM-BINDING PROTEIN 8-RELATED"/>
    <property type="match status" value="1"/>
</dbReference>
<dbReference type="Pfam" id="PF13499">
    <property type="entry name" value="EF-hand_7"/>
    <property type="match status" value="1"/>
</dbReference>
<dbReference type="SMART" id="SM00054">
    <property type="entry name" value="EFh"/>
    <property type="match status" value="2"/>
</dbReference>
<dbReference type="SUPFAM" id="SSF47473">
    <property type="entry name" value="EF-hand"/>
    <property type="match status" value="1"/>
</dbReference>
<dbReference type="PROSITE" id="PS00018">
    <property type="entry name" value="EF_HAND_1"/>
    <property type="match status" value="2"/>
</dbReference>
<dbReference type="PROSITE" id="PS50222">
    <property type="entry name" value="EF_HAND_2"/>
    <property type="match status" value="2"/>
</dbReference>
<keyword id="KW-0106">Calcium</keyword>
<keyword id="KW-1003">Cell membrane</keyword>
<keyword id="KW-0963">Cytoplasm</keyword>
<keyword id="KW-0333">Golgi apparatus</keyword>
<keyword id="KW-0472">Membrane</keyword>
<keyword id="KW-0479">Metal-binding</keyword>
<keyword id="KW-1185">Reference proteome</keyword>
<keyword id="KW-0677">Repeat</keyword>
<keyword id="KW-0812">Transmembrane</keyword>
<keyword id="KW-1133">Transmembrane helix</keyword>
<sequence>MPFHPVTAALMYRGIYTVPNLLSEQRPVDIPEDELEEIREAFKVFDRDGNGFISKQELGTAMRSLGYMPNEVELEVIIQRLDMDGDGQVDFEEFVTLLGPKLSTSGIPEKFHGTDFDTVFWKCDMQKLTVDELKRLLYDTFCEHLSMKDIENIIMTEEESHLGTAEECPVDVETCSNQQIRQTCVRKSLICAFAIAFIISVMLIAANQVLRSGMK</sequence>
<reference key="1">
    <citation type="submission" date="2002-06" db="EMBL/GenBank/DDBJ databases">
        <title>Strong evolutionary conservation of human neurofibromatosis type 2 (NF2) gene based on the analysis of DNA sequence from human, baboon, mouse, rat, and pufferfish.</title>
        <authorList>
            <person name="Hansson C.M."/>
            <person name="Ali H."/>
            <person name="Fransson I."/>
            <person name="Roe B.A."/>
            <person name="Andersson B."/>
            <person name="Menzel U."/>
            <person name="Dumanski J.P."/>
        </authorList>
    </citation>
    <scope>NUCLEOTIDE SEQUENCE [GENOMIC DNA]</scope>
</reference>
<evidence type="ECO:0000250" key="1"/>
<evidence type="ECO:0000255" key="2"/>
<evidence type="ECO:0000255" key="3">
    <source>
        <dbReference type="PROSITE-ProRule" id="PRU00448"/>
    </source>
</evidence>
<name>CABP7_PAPAN</name>
<gene>
    <name type="primary">CABP7</name>
    <name type="synonym">CALN2</name>
</gene>
<organism>
    <name type="scientific">Papio anubis</name>
    <name type="common">Olive baboon</name>
    <dbReference type="NCBI Taxonomy" id="9555"/>
    <lineage>
        <taxon>Eukaryota</taxon>
        <taxon>Metazoa</taxon>
        <taxon>Chordata</taxon>
        <taxon>Craniata</taxon>
        <taxon>Vertebrata</taxon>
        <taxon>Euteleostomi</taxon>
        <taxon>Mammalia</taxon>
        <taxon>Eutheria</taxon>
        <taxon>Euarchontoglires</taxon>
        <taxon>Primates</taxon>
        <taxon>Haplorrhini</taxon>
        <taxon>Catarrhini</taxon>
        <taxon>Cercopithecidae</taxon>
        <taxon>Cercopithecinae</taxon>
        <taxon>Papio</taxon>
    </lineage>
</organism>
<accession>Q866X0</accession>
<protein>
    <recommendedName>
        <fullName>Calcium-binding protein 7</fullName>
        <shortName>CaBP7</shortName>
    </recommendedName>
    <alternativeName>
        <fullName>Calneuron II</fullName>
    </alternativeName>
    <alternativeName>
        <fullName>Calneuron-2</fullName>
    </alternativeName>
</protein>
<proteinExistence type="inferred from homology"/>
<feature type="chain" id="PRO_0000073528" description="Calcium-binding protein 7">
    <location>
        <begin position="1"/>
        <end position="215"/>
    </location>
</feature>
<feature type="topological domain" description="Cytoplasmic" evidence="2">
    <location>
        <begin position="1"/>
        <end position="188"/>
    </location>
</feature>
<feature type="transmembrane region" description="Helical; Anchor for type IV membrane protein" evidence="2">
    <location>
        <begin position="189"/>
        <end position="209"/>
    </location>
</feature>
<feature type="topological domain" description="Extracellular" evidence="2">
    <location>
        <begin position="210"/>
        <end position="215"/>
    </location>
</feature>
<feature type="domain" description="EF-hand 1" evidence="3">
    <location>
        <begin position="33"/>
        <end position="68"/>
    </location>
</feature>
<feature type="domain" description="EF-hand 2" evidence="3">
    <location>
        <begin position="69"/>
        <end position="104"/>
    </location>
</feature>
<feature type="binding site" evidence="3">
    <location>
        <position position="46"/>
    </location>
    <ligand>
        <name>Ca(2+)</name>
        <dbReference type="ChEBI" id="CHEBI:29108"/>
        <label>1</label>
    </ligand>
</feature>
<feature type="binding site" evidence="3">
    <location>
        <position position="48"/>
    </location>
    <ligand>
        <name>Ca(2+)</name>
        <dbReference type="ChEBI" id="CHEBI:29108"/>
        <label>1</label>
    </ligand>
</feature>
<feature type="binding site" evidence="3">
    <location>
        <position position="50"/>
    </location>
    <ligand>
        <name>Ca(2+)</name>
        <dbReference type="ChEBI" id="CHEBI:29108"/>
        <label>1</label>
    </ligand>
</feature>
<feature type="binding site" evidence="3">
    <location>
        <position position="57"/>
    </location>
    <ligand>
        <name>Ca(2+)</name>
        <dbReference type="ChEBI" id="CHEBI:29108"/>
        <label>1</label>
    </ligand>
</feature>
<feature type="binding site" evidence="3">
    <location>
        <position position="82"/>
    </location>
    <ligand>
        <name>Ca(2+)</name>
        <dbReference type="ChEBI" id="CHEBI:29108"/>
        <label>2</label>
    </ligand>
</feature>
<feature type="binding site" evidence="3">
    <location>
        <position position="84"/>
    </location>
    <ligand>
        <name>Ca(2+)</name>
        <dbReference type="ChEBI" id="CHEBI:29108"/>
        <label>2</label>
    </ligand>
</feature>
<feature type="binding site" evidence="3">
    <location>
        <position position="86"/>
    </location>
    <ligand>
        <name>Ca(2+)</name>
        <dbReference type="ChEBI" id="CHEBI:29108"/>
        <label>2</label>
    </ligand>
</feature>
<feature type="binding site" evidence="3">
    <location>
        <position position="88"/>
    </location>
    <ligand>
        <name>Ca(2+)</name>
        <dbReference type="ChEBI" id="CHEBI:29108"/>
        <label>2</label>
    </ligand>
</feature>
<feature type="binding site" evidence="3">
    <location>
        <position position="93"/>
    </location>
    <ligand>
        <name>Ca(2+)</name>
        <dbReference type="ChEBI" id="CHEBI:29108"/>
        <label>2</label>
    </ligand>
</feature>
<comment type="function">
    <text evidence="1">Negatively regulates Golgi-to-plasma membrane trafficking by interacting with PI4KB and inhibiting its activity.</text>
</comment>
<comment type="subunit">
    <text evidence="1">Interacts with PI4KB. This binding competes with FREQ/NCS1 binding in a calcium-dependent manner (By similarity).</text>
</comment>
<comment type="subcellular location">
    <subcellularLocation>
        <location evidence="1">Golgi apparatus</location>
        <location evidence="1">trans-Golgi network membrane</location>
        <topology evidence="1">Single-pass type IV membrane protein</topology>
    </subcellularLocation>
    <subcellularLocation>
        <location evidence="1">Cytoplasm</location>
        <location evidence="1">Perinuclear region</location>
    </subcellularLocation>
    <subcellularLocation>
        <location evidence="1">Cell membrane</location>
        <topology evidence="1">Single-pass type IV membrane protein</topology>
    </subcellularLocation>
</comment>
<comment type="domain">
    <text evidence="1">The C-terminal transmembrane domain (TMD) is necessary and sufficient for membrane targeting.</text>
</comment>